<sequence length="945" mass="105892">MSNKKADSKPQAKYPVNLLDTPFPMRGDLPKREPQWVKEWEARGIYEKIRAASQGRPKFILHDGPPYANGDIHLGHAVNKILKDIVVKSRNMAGFDAPYVPGWDCHGMPIEIQIEKQFGKSLPAAEVMSKARAYATEQIEKQKVGFKRLGVLGDWANPYKTMNFVNEAEEIRALGKIIEKGYVYRGLKPVNWCFDCGSALAEAEVEYKDRTDPTIDVMFAFAEPEKTAHAFGLPALPRAEGGIVIWTTTPWTIPANQALNLHPEIIYALVDTERGLLIIAEERVEACMTDFKLTGRVVATAPGVKLANLRFHHPLASAHPGYKRTAPVYLGDYVTTDTGTGVVHSSPAYGIEDFMSCKAHGMTDSDFINPVMGDGRYIESLPLFGGLSIWDANPKIVDALNAAGSLLRSEKYTHSYMHCWRHKTPIIYRATSQWFAGMDVTPQDGGKTLRETALEGVDATAFYPSWGKQRLFSMIANRPDWTLSRQRQWGVPMAFFVHKETGELHPRTLELLEEVAKRVEQSGIEAWQSLDPRELIGDDANLYEKNRDTLDVWFDSGTTHWHVLRGSHKDQLQFPADLYLEGSDQHRGWFHSSLLTASMIDGRAPYKGLLTHGFTVDGEGRKMSKSLGNGIDPHEVANRLGAEIIRLWIASTDYSGELAISEEILKRVTEGYRRIRNTLRFLLANLSDFDFAQHAVPVDEWLEIDRYAVAFSQQLQTELLGHYEKYEFHPVVAKLQTYCSEDLGGFYLDVLKDRLYTSAADSRARRSAQTALYHLTHGLLRVLAPFLSFTAEEAWKVFQPASDTIFTETYYAYPEVAGSAALIEKWALLRDVRGSVTKALEEARTANRIGSSLQAEVAVHASGARYDALTSLGDDLKFVLITSAATVVKVDDEAQESVDVAASKYQKCERCWHYREDVGAHAEHPTLCGRCFSNLFENGEIRSAA</sequence>
<feature type="chain" id="PRO_1000022045" description="Isoleucine--tRNA ligase">
    <location>
        <begin position="1"/>
        <end position="945"/>
    </location>
</feature>
<feature type="short sequence motif" description="'HIGH' region">
    <location>
        <begin position="66"/>
        <end position="76"/>
    </location>
</feature>
<feature type="short sequence motif" description="'KMSKS' region">
    <location>
        <begin position="622"/>
        <end position="626"/>
    </location>
</feature>
<feature type="binding site" evidence="1">
    <location>
        <position position="581"/>
    </location>
    <ligand>
        <name>L-isoleucyl-5'-AMP</name>
        <dbReference type="ChEBI" id="CHEBI:178002"/>
    </ligand>
</feature>
<feature type="binding site" evidence="1">
    <location>
        <position position="625"/>
    </location>
    <ligand>
        <name>ATP</name>
        <dbReference type="ChEBI" id="CHEBI:30616"/>
    </ligand>
</feature>
<feature type="binding site" evidence="1">
    <location>
        <position position="908"/>
    </location>
    <ligand>
        <name>Zn(2+)</name>
        <dbReference type="ChEBI" id="CHEBI:29105"/>
    </ligand>
</feature>
<feature type="binding site" evidence="1">
    <location>
        <position position="911"/>
    </location>
    <ligand>
        <name>Zn(2+)</name>
        <dbReference type="ChEBI" id="CHEBI:29105"/>
    </ligand>
</feature>
<feature type="binding site" evidence="1">
    <location>
        <position position="928"/>
    </location>
    <ligand>
        <name>Zn(2+)</name>
        <dbReference type="ChEBI" id="CHEBI:29105"/>
    </ligand>
</feature>
<feature type="binding site" evidence="1">
    <location>
        <position position="931"/>
    </location>
    <ligand>
        <name>Zn(2+)</name>
        <dbReference type="ChEBI" id="CHEBI:29105"/>
    </ligand>
</feature>
<evidence type="ECO:0000255" key="1">
    <source>
        <dbReference type="HAMAP-Rule" id="MF_02002"/>
    </source>
</evidence>
<gene>
    <name evidence="1" type="primary">ileS</name>
    <name type="ordered locus">Bcen_1901</name>
</gene>
<reference key="1">
    <citation type="submission" date="2006-05" db="EMBL/GenBank/DDBJ databases">
        <title>Complete sequence of chromosome 1 of Burkholderia cenocepacia AU 1054.</title>
        <authorList>
            <consortium name="US DOE Joint Genome Institute"/>
            <person name="Copeland A."/>
            <person name="Lucas S."/>
            <person name="Lapidus A."/>
            <person name="Barry K."/>
            <person name="Detter J.C."/>
            <person name="Glavina del Rio T."/>
            <person name="Hammon N."/>
            <person name="Israni S."/>
            <person name="Dalin E."/>
            <person name="Tice H."/>
            <person name="Pitluck S."/>
            <person name="Chain P."/>
            <person name="Malfatti S."/>
            <person name="Shin M."/>
            <person name="Vergez L."/>
            <person name="Schmutz J."/>
            <person name="Larimer F."/>
            <person name="Land M."/>
            <person name="Hauser L."/>
            <person name="Kyrpides N."/>
            <person name="Lykidis A."/>
            <person name="LiPuma J.J."/>
            <person name="Konstantinidis K."/>
            <person name="Tiedje J.M."/>
            <person name="Richardson P."/>
        </authorList>
    </citation>
    <scope>NUCLEOTIDE SEQUENCE [LARGE SCALE GENOMIC DNA]</scope>
    <source>
        <strain>AU 1054</strain>
    </source>
</reference>
<proteinExistence type="inferred from homology"/>
<keyword id="KW-0030">Aminoacyl-tRNA synthetase</keyword>
<keyword id="KW-0067">ATP-binding</keyword>
<keyword id="KW-0963">Cytoplasm</keyword>
<keyword id="KW-0436">Ligase</keyword>
<keyword id="KW-0479">Metal-binding</keyword>
<keyword id="KW-0547">Nucleotide-binding</keyword>
<keyword id="KW-0648">Protein biosynthesis</keyword>
<keyword id="KW-0862">Zinc</keyword>
<protein>
    <recommendedName>
        <fullName evidence="1">Isoleucine--tRNA ligase</fullName>
        <ecNumber evidence="1">6.1.1.5</ecNumber>
    </recommendedName>
    <alternativeName>
        <fullName evidence="1">Isoleucyl-tRNA synthetase</fullName>
        <shortName evidence="1">IleRS</shortName>
    </alternativeName>
</protein>
<dbReference type="EC" id="6.1.1.5" evidence="1"/>
<dbReference type="EMBL" id="CP000378">
    <property type="protein sequence ID" value="ABF76804.1"/>
    <property type="molecule type" value="Genomic_DNA"/>
</dbReference>
<dbReference type="SMR" id="Q1BUA1"/>
<dbReference type="HOGENOM" id="CLU_001493_7_1_4"/>
<dbReference type="GO" id="GO:0005829">
    <property type="term" value="C:cytosol"/>
    <property type="evidence" value="ECO:0007669"/>
    <property type="project" value="TreeGrafter"/>
</dbReference>
<dbReference type="GO" id="GO:0002161">
    <property type="term" value="F:aminoacyl-tRNA deacylase activity"/>
    <property type="evidence" value="ECO:0007669"/>
    <property type="project" value="InterPro"/>
</dbReference>
<dbReference type="GO" id="GO:0005524">
    <property type="term" value="F:ATP binding"/>
    <property type="evidence" value="ECO:0007669"/>
    <property type="project" value="UniProtKB-UniRule"/>
</dbReference>
<dbReference type="GO" id="GO:0004822">
    <property type="term" value="F:isoleucine-tRNA ligase activity"/>
    <property type="evidence" value="ECO:0007669"/>
    <property type="project" value="UniProtKB-UniRule"/>
</dbReference>
<dbReference type="GO" id="GO:0000049">
    <property type="term" value="F:tRNA binding"/>
    <property type="evidence" value="ECO:0007669"/>
    <property type="project" value="InterPro"/>
</dbReference>
<dbReference type="GO" id="GO:0008270">
    <property type="term" value="F:zinc ion binding"/>
    <property type="evidence" value="ECO:0007669"/>
    <property type="project" value="UniProtKB-UniRule"/>
</dbReference>
<dbReference type="GO" id="GO:0006428">
    <property type="term" value="P:isoleucyl-tRNA aminoacylation"/>
    <property type="evidence" value="ECO:0007669"/>
    <property type="project" value="UniProtKB-UniRule"/>
</dbReference>
<dbReference type="CDD" id="cd07960">
    <property type="entry name" value="Anticodon_Ia_Ile_BEm"/>
    <property type="match status" value="1"/>
</dbReference>
<dbReference type="CDD" id="cd00818">
    <property type="entry name" value="IleRS_core"/>
    <property type="match status" value="1"/>
</dbReference>
<dbReference type="FunFam" id="1.10.730.20:FF:000001">
    <property type="entry name" value="Isoleucine--tRNA ligase"/>
    <property type="match status" value="1"/>
</dbReference>
<dbReference type="FunFam" id="3.40.50.620:FF:000042">
    <property type="entry name" value="Isoleucine--tRNA ligase"/>
    <property type="match status" value="1"/>
</dbReference>
<dbReference type="FunFam" id="3.40.50.620:FF:000048">
    <property type="entry name" value="Isoleucine--tRNA ligase"/>
    <property type="match status" value="1"/>
</dbReference>
<dbReference type="Gene3D" id="1.10.730.20">
    <property type="match status" value="1"/>
</dbReference>
<dbReference type="Gene3D" id="3.40.50.620">
    <property type="entry name" value="HUPs"/>
    <property type="match status" value="2"/>
</dbReference>
<dbReference type="Gene3D" id="3.90.740.10">
    <property type="entry name" value="Valyl/Leucyl/Isoleucyl-tRNA synthetase, editing domain"/>
    <property type="match status" value="1"/>
</dbReference>
<dbReference type="HAMAP" id="MF_02002">
    <property type="entry name" value="Ile_tRNA_synth_type1"/>
    <property type="match status" value="1"/>
</dbReference>
<dbReference type="InterPro" id="IPR001412">
    <property type="entry name" value="aa-tRNA-synth_I_CS"/>
</dbReference>
<dbReference type="InterPro" id="IPR002300">
    <property type="entry name" value="aa-tRNA-synth_Ia"/>
</dbReference>
<dbReference type="InterPro" id="IPR033708">
    <property type="entry name" value="Anticodon_Ile_BEm"/>
</dbReference>
<dbReference type="InterPro" id="IPR002301">
    <property type="entry name" value="Ile-tRNA-ligase"/>
</dbReference>
<dbReference type="InterPro" id="IPR023585">
    <property type="entry name" value="Ile-tRNA-ligase_type1"/>
</dbReference>
<dbReference type="InterPro" id="IPR050081">
    <property type="entry name" value="Ile-tRNA_ligase"/>
</dbReference>
<dbReference type="InterPro" id="IPR013155">
    <property type="entry name" value="M/V/L/I-tRNA-synth_anticd-bd"/>
</dbReference>
<dbReference type="InterPro" id="IPR014729">
    <property type="entry name" value="Rossmann-like_a/b/a_fold"/>
</dbReference>
<dbReference type="InterPro" id="IPR009080">
    <property type="entry name" value="tRNAsynth_Ia_anticodon-bd"/>
</dbReference>
<dbReference type="InterPro" id="IPR009008">
    <property type="entry name" value="Val/Leu/Ile-tRNA-synth_edit"/>
</dbReference>
<dbReference type="InterPro" id="IPR010663">
    <property type="entry name" value="Znf_FPG/IleRS"/>
</dbReference>
<dbReference type="NCBIfam" id="TIGR00392">
    <property type="entry name" value="ileS"/>
    <property type="match status" value="1"/>
</dbReference>
<dbReference type="PANTHER" id="PTHR42765:SF1">
    <property type="entry name" value="ISOLEUCINE--TRNA LIGASE, MITOCHONDRIAL"/>
    <property type="match status" value="1"/>
</dbReference>
<dbReference type="PANTHER" id="PTHR42765">
    <property type="entry name" value="SOLEUCYL-TRNA SYNTHETASE"/>
    <property type="match status" value="1"/>
</dbReference>
<dbReference type="Pfam" id="PF08264">
    <property type="entry name" value="Anticodon_1"/>
    <property type="match status" value="1"/>
</dbReference>
<dbReference type="Pfam" id="PF00133">
    <property type="entry name" value="tRNA-synt_1"/>
    <property type="match status" value="1"/>
</dbReference>
<dbReference type="Pfam" id="PF06827">
    <property type="entry name" value="zf-FPG_IleRS"/>
    <property type="match status" value="1"/>
</dbReference>
<dbReference type="PRINTS" id="PR00984">
    <property type="entry name" value="TRNASYNTHILE"/>
</dbReference>
<dbReference type="SUPFAM" id="SSF47323">
    <property type="entry name" value="Anticodon-binding domain of a subclass of class I aminoacyl-tRNA synthetases"/>
    <property type="match status" value="1"/>
</dbReference>
<dbReference type="SUPFAM" id="SSF52374">
    <property type="entry name" value="Nucleotidylyl transferase"/>
    <property type="match status" value="1"/>
</dbReference>
<dbReference type="SUPFAM" id="SSF50677">
    <property type="entry name" value="ValRS/IleRS/LeuRS editing domain"/>
    <property type="match status" value="1"/>
</dbReference>
<dbReference type="PROSITE" id="PS00178">
    <property type="entry name" value="AA_TRNA_LIGASE_I"/>
    <property type="match status" value="1"/>
</dbReference>
<accession>Q1BUA1</accession>
<organism>
    <name type="scientific">Burkholderia orbicola (strain AU 1054)</name>
    <dbReference type="NCBI Taxonomy" id="331271"/>
    <lineage>
        <taxon>Bacteria</taxon>
        <taxon>Pseudomonadati</taxon>
        <taxon>Pseudomonadota</taxon>
        <taxon>Betaproteobacteria</taxon>
        <taxon>Burkholderiales</taxon>
        <taxon>Burkholderiaceae</taxon>
        <taxon>Burkholderia</taxon>
        <taxon>Burkholderia cepacia complex</taxon>
        <taxon>Burkholderia orbicola</taxon>
    </lineage>
</organism>
<name>SYI_BURO1</name>
<comment type="function">
    <text evidence="1">Catalyzes the attachment of isoleucine to tRNA(Ile). As IleRS can inadvertently accommodate and process structurally similar amino acids such as valine, to avoid such errors it has two additional distinct tRNA(Ile)-dependent editing activities. One activity is designated as 'pretransfer' editing and involves the hydrolysis of activated Val-AMP. The other activity is designated 'posttransfer' editing and involves deacylation of mischarged Val-tRNA(Ile).</text>
</comment>
<comment type="catalytic activity">
    <reaction evidence="1">
        <text>tRNA(Ile) + L-isoleucine + ATP = L-isoleucyl-tRNA(Ile) + AMP + diphosphate</text>
        <dbReference type="Rhea" id="RHEA:11060"/>
        <dbReference type="Rhea" id="RHEA-COMP:9666"/>
        <dbReference type="Rhea" id="RHEA-COMP:9695"/>
        <dbReference type="ChEBI" id="CHEBI:30616"/>
        <dbReference type="ChEBI" id="CHEBI:33019"/>
        <dbReference type="ChEBI" id="CHEBI:58045"/>
        <dbReference type="ChEBI" id="CHEBI:78442"/>
        <dbReference type="ChEBI" id="CHEBI:78528"/>
        <dbReference type="ChEBI" id="CHEBI:456215"/>
        <dbReference type="EC" id="6.1.1.5"/>
    </reaction>
</comment>
<comment type="cofactor">
    <cofactor evidence="1">
        <name>Zn(2+)</name>
        <dbReference type="ChEBI" id="CHEBI:29105"/>
    </cofactor>
    <text evidence="1">Binds 1 zinc ion per subunit.</text>
</comment>
<comment type="subunit">
    <text evidence="1">Monomer.</text>
</comment>
<comment type="subcellular location">
    <subcellularLocation>
        <location evidence="1">Cytoplasm</location>
    </subcellularLocation>
</comment>
<comment type="domain">
    <text evidence="1">IleRS has two distinct active sites: one for aminoacylation and one for editing. The misactivated valine is translocated from the active site to the editing site, which sterically excludes the correctly activated isoleucine. The single editing site contains two valyl binding pockets, one specific for each substrate (Val-AMP or Val-tRNA(Ile)).</text>
</comment>
<comment type="similarity">
    <text evidence="1">Belongs to the class-I aminoacyl-tRNA synthetase family. IleS type 1 subfamily.</text>
</comment>